<protein>
    <recommendedName>
        <fullName evidence="1">Glycerol-3-phosphate acyltransferase</fullName>
    </recommendedName>
    <alternativeName>
        <fullName evidence="1">Acyl-PO4 G3P acyltransferase</fullName>
    </alternativeName>
    <alternativeName>
        <fullName evidence="1">Acyl-phosphate--glycerol-3-phosphate acyltransferase</fullName>
    </alternativeName>
    <alternativeName>
        <fullName evidence="1">G3P acyltransferase</fullName>
        <shortName evidence="1">GPAT</shortName>
        <ecNumber evidence="1">2.3.1.275</ecNumber>
    </alternativeName>
    <alternativeName>
        <fullName evidence="1">Lysophosphatidic acid synthase</fullName>
        <shortName evidence="1">LPA synthase</shortName>
    </alternativeName>
</protein>
<name>PLSY_LISMC</name>
<proteinExistence type="inferred from homology"/>
<feature type="chain" id="PRO_1000213413" description="Glycerol-3-phosphate acyltransferase">
    <location>
        <begin position="1"/>
        <end position="198"/>
    </location>
</feature>
<feature type="transmembrane region" description="Helical" evidence="1">
    <location>
        <begin position="5"/>
        <end position="25"/>
    </location>
</feature>
<feature type="transmembrane region" description="Helical" evidence="1">
    <location>
        <begin position="56"/>
        <end position="76"/>
    </location>
</feature>
<feature type="transmembrane region" description="Helical" evidence="1">
    <location>
        <begin position="84"/>
        <end position="104"/>
    </location>
</feature>
<feature type="transmembrane region" description="Helical" evidence="1">
    <location>
        <begin position="114"/>
        <end position="134"/>
    </location>
</feature>
<feature type="transmembrane region" description="Helical" evidence="1">
    <location>
        <begin position="158"/>
        <end position="178"/>
    </location>
</feature>
<accession>C1L2J2</accession>
<keyword id="KW-1003">Cell membrane</keyword>
<keyword id="KW-0444">Lipid biosynthesis</keyword>
<keyword id="KW-0443">Lipid metabolism</keyword>
<keyword id="KW-0472">Membrane</keyword>
<keyword id="KW-0594">Phospholipid biosynthesis</keyword>
<keyword id="KW-1208">Phospholipid metabolism</keyword>
<keyword id="KW-0808">Transferase</keyword>
<keyword id="KW-0812">Transmembrane</keyword>
<keyword id="KW-1133">Transmembrane helix</keyword>
<evidence type="ECO:0000255" key="1">
    <source>
        <dbReference type="HAMAP-Rule" id="MF_01043"/>
    </source>
</evidence>
<gene>
    <name evidence="1" type="primary">plsY</name>
    <name type="ordered locus">Lm4b_01294</name>
</gene>
<reference key="1">
    <citation type="journal article" date="2012" name="BMC Genomics">
        <title>Comparative genomics and transcriptomics of lineages I, II, and III strains of Listeria monocytogenes.</title>
        <authorList>
            <person name="Hain T."/>
            <person name="Ghai R."/>
            <person name="Billion A."/>
            <person name="Kuenne C.T."/>
            <person name="Steinweg C."/>
            <person name="Izar B."/>
            <person name="Mohamed W."/>
            <person name="Mraheil M."/>
            <person name="Domann E."/>
            <person name="Schaffrath S."/>
            <person name="Karst U."/>
            <person name="Goesmann A."/>
            <person name="Oehm S."/>
            <person name="Puhler A."/>
            <person name="Merkl R."/>
            <person name="Vorwerk S."/>
            <person name="Glaser P."/>
            <person name="Garrido P."/>
            <person name="Rusniok C."/>
            <person name="Buchrieser C."/>
            <person name="Goebel W."/>
            <person name="Chakraborty T."/>
        </authorList>
    </citation>
    <scope>NUCLEOTIDE SEQUENCE [LARGE SCALE GENOMIC DNA]</scope>
    <source>
        <strain>CLIP80459</strain>
    </source>
</reference>
<sequence length="198" mass="21599">MTINLILLSLLAYVIGSIPSGLWIGKIFYKKDIRDFGSGNLGATNSFRVLGIKAGSIVTVMDILKGTVATLLPFFFQLNVDHHFWLLTGAFAIIGHSFPLFAGFRGGKAVATSAGVILAYAPLLFVAALVVFLVTLKLSKYVSLSSMIGALAALIISLFMGDWILIILVACIALFVIWRHRANITRIRNGEEPKIKWM</sequence>
<comment type="function">
    <text evidence="1">Catalyzes the transfer of an acyl group from acyl-phosphate (acyl-PO(4)) to glycerol-3-phosphate (G3P) to form lysophosphatidic acid (LPA). This enzyme utilizes acyl-phosphate as fatty acyl donor, but not acyl-CoA or acyl-ACP.</text>
</comment>
<comment type="catalytic activity">
    <reaction evidence="1">
        <text>an acyl phosphate + sn-glycerol 3-phosphate = a 1-acyl-sn-glycero-3-phosphate + phosphate</text>
        <dbReference type="Rhea" id="RHEA:34075"/>
        <dbReference type="ChEBI" id="CHEBI:43474"/>
        <dbReference type="ChEBI" id="CHEBI:57597"/>
        <dbReference type="ChEBI" id="CHEBI:57970"/>
        <dbReference type="ChEBI" id="CHEBI:59918"/>
        <dbReference type="EC" id="2.3.1.275"/>
    </reaction>
</comment>
<comment type="pathway">
    <text evidence="1">Lipid metabolism; phospholipid metabolism.</text>
</comment>
<comment type="subunit">
    <text evidence="1">Probably interacts with PlsX.</text>
</comment>
<comment type="subcellular location">
    <subcellularLocation>
        <location evidence="1">Cell membrane</location>
        <topology evidence="1">Multi-pass membrane protein</topology>
    </subcellularLocation>
</comment>
<comment type="similarity">
    <text evidence="1">Belongs to the PlsY family.</text>
</comment>
<organism>
    <name type="scientific">Listeria monocytogenes serotype 4b (strain CLIP80459)</name>
    <dbReference type="NCBI Taxonomy" id="568819"/>
    <lineage>
        <taxon>Bacteria</taxon>
        <taxon>Bacillati</taxon>
        <taxon>Bacillota</taxon>
        <taxon>Bacilli</taxon>
        <taxon>Bacillales</taxon>
        <taxon>Listeriaceae</taxon>
        <taxon>Listeria</taxon>
    </lineage>
</organism>
<dbReference type="EC" id="2.3.1.275" evidence="1"/>
<dbReference type="EMBL" id="FM242711">
    <property type="protein sequence ID" value="CAS05058.1"/>
    <property type="molecule type" value="Genomic_DNA"/>
</dbReference>
<dbReference type="RefSeq" id="WP_003726698.1">
    <property type="nucleotide sequence ID" value="NC_012488.1"/>
</dbReference>
<dbReference type="SMR" id="C1L2J2"/>
<dbReference type="KEGG" id="lmc:Lm4b_01294"/>
<dbReference type="HOGENOM" id="CLU_081254_4_0_9"/>
<dbReference type="UniPathway" id="UPA00085"/>
<dbReference type="GO" id="GO:0005886">
    <property type="term" value="C:plasma membrane"/>
    <property type="evidence" value="ECO:0007669"/>
    <property type="project" value="UniProtKB-SubCell"/>
</dbReference>
<dbReference type="GO" id="GO:0043772">
    <property type="term" value="F:acyl-phosphate glycerol-3-phosphate acyltransferase activity"/>
    <property type="evidence" value="ECO:0007669"/>
    <property type="project" value="UniProtKB-UniRule"/>
</dbReference>
<dbReference type="GO" id="GO:0008654">
    <property type="term" value="P:phospholipid biosynthetic process"/>
    <property type="evidence" value="ECO:0007669"/>
    <property type="project" value="UniProtKB-UniRule"/>
</dbReference>
<dbReference type="HAMAP" id="MF_01043">
    <property type="entry name" value="PlsY"/>
    <property type="match status" value="1"/>
</dbReference>
<dbReference type="InterPro" id="IPR003811">
    <property type="entry name" value="G3P_acylTferase_PlsY"/>
</dbReference>
<dbReference type="NCBIfam" id="TIGR00023">
    <property type="entry name" value="glycerol-3-phosphate 1-O-acyltransferase PlsY"/>
    <property type="match status" value="1"/>
</dbReference>
<dbReference type="PANTHER" id="PTHR30309:SF0">
    <property type="entry name" value="GLYCEROL-3-PHOSPHATE ACYLTRANSFERASE-RELATED"/>
    <property type="match status" value="1"/>
</dbReference>
<dbReference type="PANTHER" id="PTHR30309">
    <property type="entry name" value="INNER MEMBRANE PROTEIN YGIH"/>
    <property type="match status" value="1"/>
</dbReference>
<dbReference type="Pfam" id="PF02660">
    <property type="entry name" value="G3P_acyltransf"/>
    <property type="match status" value="1"/>
</dbReference>
<dbReference type="SMART" id="SM01207">
    <property type="entry name" value="G3P_acyltransf"/>
    <property type="match status" value="1"/>
</dbReference>